<name>LMBD1_NEUCR</name>
<sequence>MVASAGLLQTSLIWVAYAVAVALVFFVAVITVFTWQTPYDRSKLVTTVAIVSLTALLATVFLLPVDIALVSSTASASRGTKKDWATPERIHGILKTLKIVYYSLYSFDALLCLVVIPFAYFWYEEHDEVLEEEGRETWSTRFWQALKYTIAFIILVIILFLVGFFVPTAAQDHGRHLDLDYFKRLLTNNNGEKALSFGLGLLMTLGVLLYVLYTATGLALLPVSLIKSAPAISAPELSAMTAAELEHNRELQRQIEMRNAGRIVAMSQKDRRELDLLLREERTLVRRQRLAAEASGEGQSTIMRIWTKTQAVFRPLKLFGGILLLCLSVILWISMLITAIDKAANSVCKSHCGYILGHINVFQPVNWVFVKAAKAFPIDYILMAFLILFLFSSSITGIASVGIRFLWVRVFQLKKGRTAPQALLIATVMQALIILAINYAVVNLLAPQYAMYGTQTFCQALSLDPGAPPDCRNHRDMIRPCSESLTDPLAKDVCTPTVMSTFLNRIVLNWTVFGAIDFWAQFAFLTVFLLVFVTSLIRTPRLNLTEIDEEAQADEEEGLLASTSRRFGATWQDITGRAKRTVGGHPNGQGYGTSGTNGTASSR</sequence>
<keyword id="KW-0846">Cobalamin</keyword>
<keyword id="KW-0170">Cobalt</keyword>
<keyword id="KW-0325">Glycoprotein</keyword>
<keyword id="KW-0458">Lysosome</keyword>
<keyword id="KW-0472">Membrane</keyword>
<keyword id="KW-1185">Reference proteome</keyword>
<keyword id="KW-0812">Transmembrane</keyword>
<keyword id="KW-1133">Transmembrane helix</keyword>
<keyword id="KW-0813">Transport</keyword>
<feature type="chain" id="PRO_0000365835" description="Probable lysosomal cobalamin transporter">
    <location>
        <begin position="1"/>
        <end position="603"/>
    </location>
</feature>
<feature type="transmembrane region" description="Helical" evidence="2">
    <location>
        <begin position="13"/>
        <end position="33"/>
    </location>
</feature>
<feature type="transmembrane region" description="Helical" evidence="2">
    <location>
        <begin position="50"/>
        <end position="70"/>
    </location>
</feature>
<feature type="transmembrane region" description="Helical" evidence="2">
    <location>
        <begin position="99"/>
        <end position="119"/>
    </location>
</feature>
<feature type="transmembrane region" description="Helical" evidence="2">
    <location>
        <begin position="150"/>
        <end position="170"/>
    </location>
</feature>
<feature type="transmembrane region" description="Helical" evidence="2">
    <location>
        <begin position="201"/>
        <end position="221"/>
    </location>
</feature>
<feature type="transmembrane region" description="Helical" evidence="2">
    <location>
        <begin position="318"/>
        <end position="338"/>
    </location>
</feature>
<feature type="transmembrane region" description="Helical" evidence="2">
    <location>
        <begin position="353"/>
        <end position="373"/>
    </location>
</feature>
<feature type="transmembrane region" description="Helical" evidence="2">
    <location>
        <begin position="381"/>
        <end position="401"/>
    </location>
</feature>
<feature type="transmembrane region" description="Helical" evidence="2">
    <location>
        <begin position="422"/>
        <end position="442"/>
    </location>
</feature>
<feature type="transmembrane region" description="Helical" evidence="2">
    <location>
        <begin position="512"/>
        <end position="532"/>
    </location>
</feature>
<feature type="region of interest" description="Disordered" evidence="3">
    <location>
        <begin position="578"/>
        <end position="603"/>
    </location>
</feature>
<feature type="compositionally biased region" description="Gly residues" evidence="3">
    <location>
        <begin position="585"/>
        <end position="595"/>
    </location>
</feature>
<feature type="glycosylation site" description="N-linked (GlcNAc...) asparagine" evidence="2">
    <location>
        <position position="509"/>
    </location>
</feature>
<feature type="glycosylation site" description="N-linked (GlcNAc...) asparagine" evidence="2">
    <location>
        <position position="543"/>
    </location>
</feature>
<feature type="glycosylation site" description="N-linked (GlcNAc...) asparagine" evidence="2">
    <location>
        <position position="597"/>
    </location>
</feature>
<reference key="1">
    <citation type="journal article" date="2003" name="Nature">
        <title>The genome sequence of the filamentous fungus Neurospora crassa.</title>
        <authorList>
            <person name="Galagan J.E."/>
            <person name="Calvo S.E."/>
            <person name="Borkovich K.A."/>
            <person name="Selker E.U."/>
            <person name="Read N.D."/>
            <person name="Jaffe D.B."/>
            <person name="FitzHugh W."/>
            <person name="Ma L.-J."/>
            <person name="Smirnov S."/>
            <person name="Purcell S."/>
            <person name="Rehman B."/>
            <person name="Elkins T."/>
            <person name="Engels R."/>
            <person name="Wang S."/>
            <person name="Nielsen C.B."/>
            <person name="Butler J."/>
            <person name="Endrizzi M."/>
            <person name="Qui D."/>
            <person name="Ianakiev P."/>
            <person name="Bell-Pedersen D."/>
            <person name="Nelson M.A."/>
            <person name="Werner-Washburne M."/>
            <person name="Selitrennikoff C.P."/>
            <person name="Kinsey J.A."/>
            <person name="Braun E.L."/>
            <person name="Zelter A."/>
            <person name="Schulte U."/>
            <person name="Kothe G.O."/>
            <person name="Jedd G."/>
            <person name="Mewes H.-W."/>
            <person name="Staben C."/>
            <person name="Marcotte E."/>
            <person name="Greenberg D."/>
            <person name="Roy A."/>
            <person name="Foley K."/>
            <person name="Naylor J."/>
            <person name="Stange-Thomann N."/>
            <person name="Barrett R."/>
            <person name="Gnerre S."/>
            <person name="Kamal M."/>
            <person name="Kamvysselis M."/>
            <person name="Mauceli E.W."/>
            <person name="Bielke C."/>
            <person name="Rudd S."/>
            <person name="Frishman D."/>
            <person name="Krystofova S."/>
            <person name="Rasmussen C."/>
            <person name="Metzenberg R.L."/>
            <person name="Perkins D.D."/>
            <person name="Kroken S."/>
            <person name="Cogoni C."/>
            <person name="Macino G."/>
            <person name="Catcheside D.E.A."/>
            <person name="Li W."/>
            <person name="Pratt R.J."/>
            <person name="Osmani S.A."/>
            <person name="DeSouza C.P.C."/>
            <person name="Glass N.L."/>
            <person name="Orbach M.J."/>
            <person name="Berglund J.A."/>
            <person name="Voelker R."/>
            <person name="Yarden O."/>
            <person name="Plamann M."/>
            <person name="Seiler S."/>
            <person name="Dunlap J.C."/>
            <person name="Radford A."/>
            <person name="Aramayo R."/>
            <person name="Natvig D.O."/>
            <person name="Alex L.A."/>
            <person name="Mannhaupt G."/>
            <person name="Ebbole D.J."/>
            <person name="Freitag M."/>
            <person name="Paulsen I."/>
            <person name="Sachs M.S."/>
            <person name="Lander E.S."/>
            <person name="Nusbaum C."/>
            <person name="Birren B.W."/>
        </authorList>
    </citation>
    <scope>NUCLEOTIDE SEQUENCE [LARGE SCALE GENOMIC DNA]</scope>
    <source>
        <strain>ATCC 24698 / 74-OR23-1A / CBS 708.71 / DSM 1257 / FGSC 987</strain>
    </source>
</reference>
<accession>Q7SDN3</accession>
<comment type="function">
    <text evidence="1">Probable lysosomal cobalamin transporter. Required to export cobalamin from lysosomes allowing its conversion to cofactors (By similarity).</text>
</comment>
<comment type="subcellular location">
    <subcellularLocation>
        <location evidence="1">Lysosome membrane</location>
        <topology evidence="1">Multi-pass membrane protein</topology>
    </subcellularLocation>
</comment>
<comment type="similarity">
    <text evidence="4">Belongs to the LIMR family. LMBRD1 subfamily.</text>
</comment>
<comment type="sequence caution" evidence="4">
    <conflict type="erroneous initiation">
        <sequence resource="EMBL-CDS" id="EAA34858"/>
    </conflict>
</comment>
<gene>
    <name type="ORF">NCU02100</name>
</gene>
<proteinExistence type="inferred from homology"/>
<dbReference type="EMBL" id="CM002236">
    <property type="protein sequence ID" value="EAA34858.1"/>
    <property type="status" value="ALT_INIT"/>
    <property type="molecule type" value="Genomic_DNA"/>
</dbReference>
<dbReference type="RefSeq" id="XP_964094.1">
    <property type="nucleotide sequence ID" value="XM_959001.2"/>
</dbReference>
<dbReference type="SMR" id="Q7SDN3"/>
<dbReference type="STRING" id="367110.Q7SDN3"/>
<dbReference type="PaxDb" id="5141-EFNCRP00000001136"/>
<dbReference type="EnsemblFungi" id="EAA34858">
    <property type="protein sequence ID" value="EAA34858"/>
    <property type="gene ID" value="NCU02100"/>
</dbReference>
<dbReference type="GeneID" id="3880243"/>
<dbReference type="KEGG" id="ncr:NCU02100"/>
<dbReference type="HOGENOM" id="CLU_028341_1_0_1"/>
<dbReference type="InParanoid" id="Q7SDN3"/>
<dbReference type="OrthoDB" id="73273at2759"/>
<dbReference type="Proteomes" id="UP000001805">
    <property type="component" value="Chromosome 1, Linkage Group I"/>
</dbReference>
<dbReference type="GO" id="GO:0005774">
    <property type="term" value="C:vacuolar membrane"/>
    <property type="evidence" value="ECO:0000318"/>
    <property type="project" value="GO_Central"/>
</dbReference>
<dbReference type="GO" id="GO:0031419">
    <property type="term" value="F:cobalamin binding"/>
    <property type="evidence" value="ECO:0007669"/>
    <property type="project" value="UniProtKB-KW"/>
</dbReference>
<dbReference type="GO" id="GO:0072665">
    <property type="term" value="P:protein localization to vacuole"/>
    <property type="evidence" value="ECO:0000318"/>
    <property type="project" value="GO_Central"/>
</dbReference>
<dbReference type="InterPro" id="IPR050854">
    <property type="entry name" value="LMBD1_LysCbl_Transport"/>
</dbReference>
<dbReference type="InterPro" id="IPR006876">
    <property type="entry name" value="LMBR1-like_membr_prot"/>
</dbReference>
<dbReference type="PANTHER" id="PTHR16130:SF2">
    <property type="entry name" value="LYSOSOMAL COBALAMIN TRANSPORT ESCORT PROTEIN LMBD1"/>
    <property type="match status" value="1"/>
</dbReference>
<dbReference type="PANTHER" id="PTHR16130">
    <property type="entry name" value="LYSOSOMAL COBALAMIN TRANSPORTER-RELATED"/>
    <property type="match status" value="1"/>
</dbReference>
<dbReference type="Pfam" id="PF04791">
    <property type="entry name" value="LMBR1"/>
    <property type="match status" value="1"/>
</dbReference>
<evidence type="ECO:0000250" key="1"/>
<evidence type="ECO:0000255" key="2"/>
<evidence type="ECO:0000256" key="3">
    <source>
        <dbReference type="SAM" id="MobiDB-lite"/>
    </source>
</evidence>
<evidence type="ECO:0000305" key="4"/>
<protein>
    <recommendedName>
        <fullName>Probable lysosomal cobalamin transporter</fullName>
    </recommendedName>
</protein>
<organism>
    <name type="scientific">Neurospora crassa (strain ATCC 24698 / 74-OR23-1A / CBS 708.71 / DSM 1257 / FGSC 987)</name>
    <dbReference type="NCBI Taxonomy" id="367110"/>
    <lineage>
        <taxon>Eukaryota</taxon>
        <taxon>Fungi</taxon>
        <taxon>Dikarya</taxon>
        <taxon>Ascomycota</taxon>
        <taxon>Pezizomycotina</taxon>
        <taxon>Sordariomycetes</taxon>
        <taxon>Sordariomycetidae</taxon>
        <taxon>Sordariales</taxon>
        <taxon>Sordariaceae</taxon>
        <taxon>Neurospora</taxon>
    </lineage>
</organism>